<feature type="chain" id="PRO_0000379370" description="ATP-dependent helicase/deoxyribonuclease subunit B">
    <location>
        <begin position="1"/>
        <end position="1179"/>
    </location>
</feature>
<organism>
    <name type="scientific">Lactobacillus delbrueckii subsp. bulgaricus (strain ATCC BAA-365 / Lb-18)</name>
    <dbReference type="NCBI Taxonomy" id="321956"/>
    <lineage>
        <taxon>Bacteria</taxon>
        <taxon>Bacillati</taxon>
        <taxon>Bacillota</taxon>
        <taxon>Bacilli</taxon>
        <taxon>Lactobacillales</taxon>
        <taxon>Lactobacillaceae</taxon>
        <taxon>Lactobacillus</taxon>
    </lineage>
</organism>
<name>ADDB_LACDB</name>
<gene>
    <name evidence="1" type="primary">rexB</name>
    <name type="ordered locus">LBUL_0907</name>
</gene>
<keyword id="KW-0067">ATP-binding</keyword>
<keyword id="KW-0227">DNA damage</keyword>
<keyword id="KW-0234">DNA repair</keyword>
<keyword id="KW-0238">DNA-binding</keyword>
<keyword id="KW-0269">Exonuclease</keyword>
<keyword id="KW-0347">Helicase</keyword>
<keyword id="KW-0378">Hydrolase</keyword>
<keyword id="KW-0540">Nuclease</keyword>
<keyword id="KW-0547">Nucleotide-binding</keyword>
<protein>
    <recommendedName>
        <fullName evidence="1">ATP-dependent helicase/deoxyribonuclease subunit B</fullName>
        <ecNumber evidence="1">3.1.-.-</ecNumber>
    </recommendedName>
    <alternativeName>
        <fullName evidence="1">ATP-dependent helicase/nuclease subunit RexB</fullName>
    </alternativeName>
</protein>
<accession>Q04AN8</accession>
<proteinExistence type="inferred from homology"/>
<evidence type="ECO:0000255" key="1">
    <source>
        <dbReference type="HAMAP-Rule" id="MF_01453"/>
    </source>
</evidence>
<reference key="1">
    <citation type="journal article" date="2006" name="Proc. Natl. Acad. Sci. U.S.A.">
        <title>Comparative genomics of the lactic acid bacteria.</title>
        <authorList>
            <person name="Makarova K.S."/>
            <person name="Slesarev A."/>
            <person name="Wolf Y.I."/>
            <person name="Sorokin A."/>
            <person name="Mirkin B."/>
            <person name="Koonin E.V."/>
            <person name="Pavlov A."/>
            <person name="Pavlova N."/>
            <person name="Karamychev V."/>
            <person name="Polouchine N."/>
            <person name="Shakhova V."/>
            <person name="Grigoriev I."/>
            <person name="Lou Y."/>
            <person name="Rohksar D."/>
            <person name="Lucas S."/>
            <person name="Huang K."/>
            <person name="Goodstein D.M."/>
            <person name="Hawkins T."/>
            <person name="Plengvidhya V."/>
            <person name="Welker D."/>
            <person name="Hughes J."/>
            <person name="Goh Y."/>
            <person name="Benson A."/>
            <person name="Baldwin K."/>
            <person name="Lee J.-H."/>
            <person name="Diaz-Muniz I."/>
            <person name="Dosti B."/>
            <person name="Smeianov V."/>
            <person name="Wechter W."/>
            <person name="Barabote R."/>
            <person name="Lorca G."/>
            <person name="Altermann E."/>
            <person name="Barrangou R."/>
            <person name="Ganesan B."/>
            <person name="Xie Y."/>
            <person name="Rawsthorne H."/>
            <person name="Tamir D."/>
            <person name="Parker C."/>
            <person name="Breidt F."/>
            <person name="Broadbent J.R."/>
            <person name="Hutkins R."/>
            <person name="O'Sullivan D."/>
            <person name="Steele J."/>
            <person name="Unlu G."/>
            <person name="Saier M.H. Jr."/>
            <person name="Klaenhammer T."/>
            <person name="Richardson P."/>
            <person name="Kozyavkin S."/>
            <person name="Weimer B.C."/>
            <person name="Mills D.A."/>
        </authorList>
    </citation>
    <scope>NUCLEOTIDE SEQUENCE [LARGE SCALE GENOMIC DNA]</scope>
    <source>
        <strain>ATCC BAA-365 / Lb-18</strain>
    </source>
</reference>
<sequence>MIKIITGRQSDPLQTEIIGRAARNYLAQPGKDTFIIVPNHIKFNTEVSAIGKVAQLQGREETSVKNLHVLSFSRLAWFFFKKADLLMPESLDDAAATMILEQIIDKRRDELLLFKNSHANSGMIKQVYSTILQVHTGQLDLGNLLERAADPAVALDLDNETRDKLHDLDLIYQDFLEIVSEKHFATKDELNIQLNQLLASRPDLVSQASFYVTDFSHFSIQEKMTMQLLAAFASEMTFAFKTADGSVIEPAAGEYDYVVQKTIKDLTGYFSAHDFAWEREKIASPASPARDLNQAWQGQGQPDLNNLQLVKADSRYAEAYFVARTIYDEVALKGCQYRDFLVLAPNLQEYETYLAPILRQNQIPFFDDLQQQMKYHPLVLLLENLGKLLQQAGDTPALLSIMKTRLLIPDWYLEGDAEAGEAAYLRDIDQLENFALAHGIKYSLWQKPLKDFTKAQVIALDQEQYQKWLDRLDKLRDFFVSKISRLARQLKSEKDSMTAVKLFFDFLVKNGVSARLEAWRLKASESGDLQQAQQPEQCWNLLLSLLKDYLLVNPENFAWADFFKMLTAAFSQANFATIPASLDAVTLSEYGMVQTSGYKQVFIIGAANGSLPQINDQPNFLTTENLASLADFFDQDAYLEDSQQLRNLDQEYQFGNALALASDRVYISYPVINSNNDLLDPSIYYKRLLKLVNGREYRQRDLPDIAEKDRTEFARQLLLFLTSPRASLGYLAYAEENSAQSPLVAKLVELSRQYEEEKAEEIAEGMAYDNNPQDISEDLAERLYGKDLLSSVSQLESYYQNSFEYFLNYGLRLRPRAENELNAIQSGNYFHRTFELLLKEMQKKNIEIDKLSELDLELLLKQVRSEILQEPLYQQFLRDPFNEYLFKVFDKTTSKVAQSYRRKQQENKMRATYGELAFGPAEKLAGLVLPLKKFAGQRKISLRGKIDRVDLFNGDQHVLGQLIDYKSSDHSFNLARFASGVDLQMIAYLDVLEKNRDLLAGGRQFDLLGAFYQYVTRKLNSVNSSSTGALFDSKLQLKENLLGGEDKLKLSGVFVSEPAWYQEVDKALEKKATSSVYRGLKLNKSGGFGKKDNFFSQDEMRELLEYVEALIEDAASEILSGQIALNPFRQGNNTGLAFSDYKDIFYFDQQLPTNSYRDLPNLKKADLLALVEKRLRQRE</sequence>
<dbReference type="EC" id="3.1.-.-" evidence="1"/>
<dbReference type="EMBL" id="CP000412">
    <property type="protein sequence ID" value="ABJ58484.1"/>
    <property type="molecule type" value="Genomic_DNA"/>
</dbReference>
<dbReference type="RefSeq" id="WP_011678226.1">
    <property type="nucleotide sequence ID" value="NC_008529.1"/>
</dbReference>
<dbReference type="SMR" id="Q04AN8"/>
<dbReference type="KEGG" id="lbu:LBUL_0907"/>
<dbReference type="HOGENOM" id="CLU_007838_0_0_9"/>
<dbReference type="BioCyc" id="LDEL321956:LBUL_RS04330-MONOMER"/>
<dbReference type="GO" id="GO:0008409">
    <property type="term" value="F:5'-3' exonuclease activity"/>
    <property type="evidence" value="ECO:0007669"/>
    <property type="project" value="UniProtKB-UniRule"/>
</dbReference>
<dbReference type="GO" id="GO:0005524">
    <property type="term" value="F:ATP binding"/>
    <property type="evidence" value="ECO:0007669"/>
    <property type="project" value="UniProtKB-UniRule"/>
</dbReference>
<dbReference type="GO" id="GO:0003690">
    <property type="term" value="F:double-stranded DNA binding"/>
    <property type="evidence" value="ECO:0007669"/>
    <property type="project" value="UniProtKB-UniRule"/>
</dbReference>
<dbReference type="GO" id="GO:0004386">
    <property type="term" value="F:helicase activity"/>
    <property type="evidence" value="ECO:0007669"/>
    <property type="project" value="UniProtKB-KW"/>
</dbReference>
<dbReference type="GO" id="GO:0016817">
    <property type="term" value="F:hydrolase activity, acting on acid anhydrides"/>
    <property type="evidence" value="ECO:0007669"/>
    <property type="project" value="InterPro"/>
</dbReference>
<dbReference type="GO" id="GO:0000724">
    <property type="term" value="P:double-strand break repair via homologous recombination"/>
    <property type="evidence" value="ECO:0007669"/>
    <property type="project" value="UniProtKB-UniRule"/>
</dbReference>
<dbReference type="Gene3D" id="3.40.50.300">
    <property type="entry name" value="P-loop containing nucleotide triphosphate hydrolases"/>
    <property type="match status" value="4"/>
</dbReference>
<dbReference type="HAMAP" id="MF_01453">
    <property type="entry name" value="AddB_type2"/>
    <property type="match status" value="1"/>
</dbReference>
<dbReference type="InterPro" id="IPR049035">
    <property type="entry name" value="ADDB_N"/>
</dbReference>
<dbReference type="InterPro" id="IPR014141">
    <property type="entry name" value="DNA_helicase_suRexB"/>
</dbReference>
<dbReference type="InterPro" id="IPR027417">
    <property type="entry name" value="P-loop_NTPase"/>
</dbReference>
<dbReference type="InterPro" id="IPR038726">
    <property type="entry name" value="PDDEXK_AddAB-type"/>
</dbReference>
<dbReference type="InterPro" id="IPR011335">
    <property type="entry name" value="Restrct_endonuc-II-like"/>
</dbReference>
<dbReference type="PANTHER" id="PTHR30591">
    <property type="entry name" value="RECBCD ENZYME SUBUNIT RECC"/>
    <property type="match status" value="1"/>
</dbReference>
<dbReference type="PANTHER" id="PTHR30591:SF1">
    <property type="entry name" value="RECBCD ENZYME SUBUNIT RECC"/>
    <property type="match status" value="1"/>
</dbReference>
<dbReference type="Pfam" id="PF21445">
    <property type="entry name" value="ADDB_N"/>
    <property type="match status" value="1"/>
</dbReference>
<dbReference type="Pfam" id="PF12705">
    <property type="entry name" value="PDDEXK_1"/>
    <property type="match status" value="1"/>
</dbReference>
<dbReference type="SUPFAM" id="SSF52540">
    <property type="entry name" value="P-loop containing nucleoside triphosphate hydrolases"/>
    <property type="match status" value="1"/>
</dbReference>
<dbReference type="SUPFAM" id="SSF52980">
    <property type="entry name" value="Restriction endonuclease-like"/>
    <property type="match status" value="1"/>
</dbReference>
<comment type="function">
    <text evidence="1">The heterodimer acts as both an ATP-dependent DNA helicase and an ATP-dependent, dual-direction single-stranded exonuclease. Recognizes the chi site generating a DNA molecule suitable for the initiation of homologous recombination. This subunit has 5' -&gt; 3' nuclease activity but not helicase activity.</text>
</comment>
<comment type="cofactor">
    <cofactor evidence="1">
        <name>Mg(2+)</name>
        <dbReference type="ChEBI" id="CHEBI:18420"/>
    </cofactor>
</comment>
<comment type="subunit">
    <text evidence="1">Heterodimer of AddA and RexB.</text>
</comment>
<comment type="miscellaneous">
    <text evidence="1">Despite having helicase-like domains, this subunit does not have helicase activity.</text>
</comment>
<comment type="similarity">
    <text evidence="1">Belongs to the helicase family. AddB/RexB type 2 subfamily.</text>
</comment>